<proteinExistence type="evidence at protein level"/>
<sequence length="157" mass="17801">MQLTVKALQGRECSLQVAEDELVSTLKHLVSDKLNVPVRQQRLLFKGKALADEKRLSDYNIGPNSKLNLVVKPLEKVLLEEGSAHRLVDSPATPIWQLISKVLARHFSVADASRVLEQLQRDYDRSLSRLTLDDIERLASRFLHPEVTEAMEKGFCK</sequence>
<protein>
    <recommendedName>
        <fullName>Ubiquitin-like protein 4A</fullName>
    </recommendedName>
    <alternativeName>
        <fullName>Ubiquitin-like protein GDX</fullName>
    </alternativeName>
</protein>
<keyword id="KW-0963">Cytoplasm</keyword>
<keyword id="KW-1017">Isopeptide bond</keyword>
<keyword id="KW-0539">Nucleus</keyword>
<keyword id="KW-0597">Phosphoprotein</keyword>
<keyword id="KW-1185">Reference proteome</keyword>
<keyword id="KW-0813">Transport</keyword>
<keyword id="KW-0832">Ubl conjugation</keyword>
<organism>
    <name type="scientific">Mus musculus</name>
    <name type="common">Mouse</name>
    <dbReference type="NCBI Taxonomy" id="10090"/>
    <lineage>
        <taxon>Eukaryota</taxon>
        <taxon>Metazoa</taxon>
        <taxon>Chordata</taxon>
        <taxon>Craniata</taxon>
        <taxon>Vertebrata</taxon>
        <taxon>Euteleostomi</taxon>
        <taxon>Mammalia</taxon>
        <taxon>Eutheria</taxon>
        <taxon>Euarchontoglires</taxon>
        <taxon>Glires</taxon>
        <taxon>Rodentia</taxon>
        <taxon>Myomorpha</taxon>
        <taxon>Muroidea</taxon>
        <taxon>Muridae</taxon>
        <taxon>Murinae</taxon>
        <taxon>Mus</taxon>
        <taxon>Mus</taxon>
    </lineage>
</organism>
<gene>
    <name evidence="4" type="primary">Ubl4a</name>
    <name evidence="3" type="synonym">Gdx</name>
    <name evidence="4" type="synonym">Ubl4</name>
</gene>
<evidence type="ECO:0000250" key="1">
    <source>
        <dbReference type="UniProtKB" id="P11441"/>
    </source>
</evidence>
<evidence type="ECO:0000255" key="2">
    <source>
        <dbReference type="PROSITE-ProRule" id="PRU00214"/>
    </source>
</evidence>
<evidence type="ECO:0000303" key="3">
    <source>
    </source>
</evidence>
<evidence type="ECO:0000312" key="4">
    <source>
        <dbReference type="MGI" id="MGI:95049"/>
    </source>
</evidence>
<comment type="function">
    <text evidence="1">As part of a cytosolic protein quality control complex, the BAG6/BAT3 complex, maintains misfolded and hydrophobic patches-containing proteins in a soluble state and participates in their proper delivery to the endoplasmic reticulum or alternatively can promote their sorting to the proteasome where they undergo degradation. The BAG6/BAT3 complex is involved in the post-translational delivery of tail-anchored/type II transmembrane proteins to the endoplasmic reticulum membrane. Recruited to ribosomes, it interacts with the transmembrane region of newly synthesized tail-anchored proteins and together with SGTA and ASNA1 mediates their delivery to the endoplasmic reticulum. Client proteins that cannot be properly delivered to the endoplasmic reticulum are ubiquitinated and sorted to the proteasome. Similarly, the BAG6/BAT3 complex also functions as a sorting platform for proteins of the secretory pathway that are mislocalized to the cytosol either delivering them to the proteasome for degradation or to the endoplasmic reticulum. The BAG6/BAT3 complex also plays a role in the endoplasmic reticulum-associated degradation (ERAD), a quality control mechanism that eliminates unwanted proteins of the endoplasmic reticulum through their retrotranslocation to the cytosol and their targeting to the proteasome. It maintains these retrotranslocated proteins in an unfolded yet soluble state condition in the cytosol to ensure their proper delivery to the proteasome.</text>
</comment>
<comment type="subunit">
    <text evidence="1">Component of the BAG6/BAT3 complex, at least composed of BAG6, UBL4A and GET4/TRC35. Interacts with BAG6; the interaction is direct and required for UBL4A protein stability. Interacts with USP13; may be indirect via BAG6.</text>
</comment>
<comment type="subcellular location">
    <subcellularLocation>
        <location evidence="1">Cytoplasm</location>
        <location evidence="1">Cytosol</location>
    </subcellularLocation>
    <subcellularLocation>
        <location evidence="1">Nucleus</location>
    </subcellularLocation>
</comment>
<comment type="PTM">
    <text evidence="1">Polyubiquitinated. Ubiquitination by AMFR and deubiquitination by USP13 may regulate the interaction between the BAG6/BAT3 complex and SGTA and therefore may regulate client proteins fate.</text>
</comment>
<feature type="chain" id="PRO_0000114865" description="Ubiquitin-like protein 4A">
    <location>
        <begin position="1"/>
        <end position="157"/>
    </location>
</feature>
<feature type="domain" description="Ubiquitin-like" evidence="2">
    <location>
        <begin position="1"/>
        <end position="76"/>
    </location>
</feature>
<feature type="region of interest" description="Required and sufficient for interaction with BAG6" evidence="1">
    <location>
        <begin position="96"/>
        <end position="138"/>
    </location>
</feature>
<feature type="modified residue" description="Phosphoserine" evidence="1">
    <location>
        <position position="90"/>
    </location>
</feature>
<feature type="cross-link" description="Glycyl lysine isopeptide (Lys-Gly) (interchain with G-Cter in ubiquitin)" evidence="1">
    <location>
        <position position="48"/>
    </location>
</feature>
<accession>P21126</accession>
<reference key="1">
    <citation type="journal article" date="1990" name="Genomics">
        <title>Linkage and sequence conservation of the X-linked genes DXS253E (P3) and DXS254E (GdX) in mouse and man.</title>
        <authorList>
            <person name="Filippi M."/>
            <person name="Tribioli C."/>
            <person name="Toniolo D."/>
        </authorList>
    </citation>
    <scope>NUCLEOTIDE SEQUENCE [GENOMIC DNA]</scope>
    <source>
        <strain>BALB/cJ</strain>
        <tissue>Liver</tissue>
    </source>
</reference>
<reference key="2">
    <citation type="journal article" date="2004" name="Genome Res.">
        <title>The status, quality, and expansion of the NIH full-length cDNA project: the Mammalian Gene Collection (MGC).</title>
        <authorList>
            <consortium name="The MGC Project Team"/>
        </authorList>
    </citation>
    <scope>NUCLEOTIDE SEQUENCE [LARGE SCALE MRNA]</scope>
    <source>
        <strain>FVB/N</strain>
        <tissue>Colon</tissue>
    </source>
</reference>
<reference key="3">
    <citation type="journal article" date="2010" name="Cell">
        <title>A tissue-specific atlas of mouse protein phosphorylation and expression.</title>
        <authorList>
            <person name="Huttlin E.L."/>
            <person name="Jedrychowski M.P."/>
            <person name="Elias J.E."/>
            <person name="Goswami T."/>
            <person name="Rad R."/>
            <person name="Beausoleil S.A."/>
            <person name="Villen J."/>
            <person name="Haas W."/>
            <person name="Sowa M.E."/>
            <person name="Gygi S.P."/>
        </authorList>
    </citation>
    <scope>IDENTIFICATION BY MASS SPECTROMETRY [LARGE SCALE ANALYSIS]</scope>
    <source>
        <tissue>Brain</tissue>
        <tissue>Brown adipose tissue</tissue>
        <tissue>Heart</tissue>
        <tissue>Kidney</tissue>
        <tissue>Liver</tissue>
        <tissue>Lung</tissue>
        <tissue>Pancreas</tissue>
        <tissue>Spleen</tissue>
        <tissue>Testis</tissue>
    </source>
</reference>
<dbReference type="EMBL" id="J04761">
    <property type="protein sequence ID" value="AAA40520.1"/>
    <property type="molecule type" value="Genomic_DNA"/>
</dbReference>
<dbReference type="EMBL" id="BC010817">
    <property type="protein sequence ID" value="AAH10817.1"/>
    <property type="molecule type" value="mRNA"/>
</dbReference>
<dbReference type="CCDS" id="CCDS30230.1"/>
<dbReference type="PIR" id="I68527">
    <property type="entry name" value="I68527"/>
</dbReference>
<dbReference type="RefSeq" id="NP_663380.1">
    <property type="nucleotide sequence ID" value="NM_145405.2"/>
</dbReference>
<dbReference type="SMR" id="P21126"/>
<dbReference type="ComplexPortal" id="CPX-133">
    <property type="entry name" value="BAT3 complex"/>
</dbReference>
<dbReference type="FunCoup" id="P21126">
    <property type="interactions" value="1798"/>
</dbReference>
<dbReference type="STRING" id="10090.ENSMUSP00000120461"/>
<dbReference type="GlyGen" id="P21126">
    <property type="glycosylation" value="1 site, 1 O-linked glycan (1 site)"/>
</dbReference>
<dbReference type="iPTMnet" id="P21126"/>
<dbReference type="PhosphoSitePlus" id="P21126"/>
<dbReference type="PaxDb" id="10090-ENSMUSP00000120461"/>
<dbReference type="PeptideAtlas" id="P21126"/>
<dbReference type="ProteomicsDB" id="298354"/>
<dbReference type="Pumba" id="P21126"/>
<dbReference type="Antibodypedia" id="504">
    <property type="antibodies" value="233 antibodies from 26 providers"/>
</dbReference>
<dbReference type="Ensembl" id="ENSMUST00000155676.8">
    <property type="protein sequence ID" value="ENSMUSP00000120461.2"/>
    <property type="gene ID" value="ENSMUSG00000015290.16"/>
</dbReference>
<dbReference type="Ensembl" id="ENSMUST00000178691.2">
    <property type="protein sequence ID" value="ENSMUSP00000136070.2"/>
    <property type="gene ID" value="ENSMUSG00000015290.16"/>
</dbReference>
<dbReference type="GeneID" id="27643"/>
<dbReference type="KEGG" id="mmu:100169864"/>
<dbReference type="KEGG" id="mmu:27643"/>
<dbReference type="UCSC" id="uc009tos.2">
    <property type="organism name" value="mouse"/>
</dbReference>
<dbReference type="AGR" id="MGI:95049"/>
<dbReference type="CTD" id="8266"/>
<dbReference type="MGI" id="MGI:95049">
    <property type="gene designation" value="Ubl4a"/>
</dbReference>
<dbReference type="VEuPathDB" id="HostDB:ENSMUSG00000015290"/>
<dbReference type="eggNOG" id="KOG0001">
    <property type="taxonomic scope" value="Eukaryota"/>
</dbReference>
<dbReference type="GeneTree" id="ENSGT00730000111022"/>
<dbReference type="HOGENOM" id="CLU_119809_0_0_1"/>
<dbReference type="InParanoid" id="P21126"/>
<dbReference type="OMA" id="SMDTSYM"/>
<dbReference type="OrthoDB" id="417450at2759"/>
<dbReference type="PhylomeDB" id="P21126"/>
<dbReference type="TreeFam" id="TF354228"/>
<dbReference type="BioGRID-ORCS" id="100169864">
    <property type="hits" value="0 hits in 1 CRISPR screen"/>
</dbReference>
<dbReference type="BioGRID-ORCS" id="27643">
    <property type="hits" value="4 hits in 47 CRISPR screens"/>
</dbReference>
<dbReference type="ChiTaRS" id="Ubl4a">
    <property type="organism name" value="mouse"/>
</dbReference>
<dbReference type="PRO" id="PR:P21126"/>
<dbReference type="Proteomes" id="UP000000589">
    <property type="component" value="Chromosome X"/>
</dbReference>
<dbReference type="RNAct" id="P21126">
    <property type="molecule type" value="protein"/>
</dbReference>
<dbReference type="Bgee" id="ENSMUSG00000015290">
    <property type="expression patterns" value="Expressed in yolk sac and 267 other cell types or tissues"/>
</dbReference>
<dbReference type="ExpressionAtlas" id="P21126">
    <property type="expression patterns" value="baseline and differential"/>
</dbReference>
<dbReference type="GO" id="GO:0071818">
    <property type="term" value="C:BAT3 complex"/>
    <property type="evidence" value="ECO:0000250"/>
    <property type="project" value="UniProtKB"/>
</dbReference>
<dbReference type="GO" id="GO:0005829">
    <property type="term" value="C:cytosol"/>
    <property type="evidence" value="ECO:0000250"/>
    <property type="project" value="UniProtKB"/>
</dbReference>
<dbReference type="GO" id="GO:0016020">
    <property type="term" value="C:membrane"/>
    <property type="evidence" value="ECO:0007669"/>
    <property type="project" value="Ensembl"/>
</dbReference>
<dbReference type="GO" id="GO:0005654">
    <property type="term" value="C:nucleoplasm"/>
    <property type="evidence" value="ECO:0007669"/>
    <property type="project" value="Ensembl"/>
</dbReference>
<dbReference type="GO" id="GO:0051087">
    <property type="term" value="F:protein-folding chaperone binding"/>
    <property type="evidence" value="ECO:0007669"/>
    <property type="project" value="Ensembl"/>
</dbReference>
<dbReference type="GO" id="GO:0006620">
    <property type="term" value="P:post-translational protein targeting to endoplasmic reticulum membrane"/>
    <property type="evidence" value="ECO:0000266"/>
    <property type="project" value="ComplexPortal"/>
</dbReference>
<dbReference type="GO" id="GO:0031647">
    <property type="term" value="P:regulation of protein stability"/>
    <property type="evidence" value="ECO:0000266"/>
    <property type="project" value="ComplexPortal"/>
</dbReference>
<dbReference type="GO" id="GO:0071816">
    <property type="term" value="P:tail-anchored membrane protein insertion into ER membrane"/>
    <property type="evidence" value="ECO:0000250"/>
    <property type="project" value="UniProtKB"/>
</dbReference>
<dbReference type="GO" id="GO:0006511">
    <property type="term" value="P:ubiquitin-dependent protein catabolic process"/>
    <property type="evidence" value="ECO:0000266"/>
    <property type="project" value="ComplexPortal"/>
</dbReference>
<dbReference type="CDD" id="cd01807">
    <property type="entry name" value="Ubl_UBL4A_like"/>
    <property type="match status" value="1"/>
</dbReference>
<dbReference type="FunFam" id="3.10.20.90:FF:000144">
    <property type="entry name" value="Ubiquitin-like protein 4A"/>
    <property type="match status" value="1"/>
</dbReference>
<dbReference type="Gene3D" id="3.10.20.90">
    <property type="entry name" value="Phosphatidylinositol 3-kinase Catalytic Subunit, Chain A, domain 1"/>
    <property type="match status" value="1"/>
</dbReference>
<dbReference type="InterPro" id="IPR000626">
    <property type="entry name" value="Ubiquitin-like_dom"/>
</dbReference>
<dbReference type="InterPro" id="IPR029071">
    <property type="entry name" value="Ubiquitin-like_domsf"/>
</dbReference>
<dbReference type="InterPro" id="IPR019954">
    <property type="entry name" value="Ubiquitin_CS"/>
</dbReference>
<dbReference type="InterPro" id="IPR019956">
    <property type="entry name" value="Ubiquitin_dom"/>
</dbReference>
<dbReference type="InterPro" id="IPR041421">
    <property type="entry name" value="Ubl4_C_TUGS"/>
</dbReference>
<dbReference type="InterPro" id="IPR047154">
    <property type="entry name" value="UBL4A-like"/>
</dbReference>
<dbReference type="InterPro" id="IPR044724">
    <property type="entry name" value="Ubl_UBL4A-like"/>
</dbReference>
<dbReference type="PANTHER" id="PTHR46555">
    <property type="entry name" value="UBIQUITIN-LIKE PROTEIN 4A"/>
    <property type="match status" value="1"/>
</dbReference>
<dbReference type="PANTHER" id="PTHR46555:SF1">
    <property type="entry name" value="UBIQUITIN-LIKE PROTEIN 4A"/>
    <property type="match status" value="1"/>
</dbReference>
<dbReference type="Pfam" id="PF17840">
    <property type="entry name" value="Tugs"/>
    <property type="match status" value="1"/>
</dbReference>
<dbReference type="Pfam" id="PF00240">
    <property type="entry name" value="ubiquitin"/>
    <property type="match status" value="1"/>
</dbReference>
<dbReference type="PRINTS" id="PR00348">
    <property type="entry name" value="UBIQUITIN"/>
</dbReference>
<dbReference type="SMART" id="SM00213">
    <property type="entry name" value="UBQ"/>
    <property type="match status" value="1"/>
</dbReference>
<dbReference type="SUPFAM" id="SSF54236">
    <property type="entry name" value="Ubiquitin-like"/>
    <property type="match status" value="1"/>
</dbReference>
<dbReference type="PROSITE" id="PS00299">
    <property type="entry name" value="UBIQUITIN_1"/>
    <property type="match status" value="1"/>
</dbReference>
<dbReference type="PROSITE" id="PS50053">
    <property type="entry name" value="UBIQUITIN_2"/>
    <property type="match status" value="1"/>
</dbReference>
<name>UBL4A_MOUSE</name>